<feature type="chain" id="PRO_0000192845" description="Casein kinase I isoform gamma-3">
    <location>
        <begin position="1"/>
        <end position="276" status="greater than"/>
    </location>
</feature>
<feature type="domain" description="Protein kinase" evidence="2">
    <location>
        <begin position="29"/>
        <end position="276" status="greater than"/>
    </location>
</feature>
<feature type="region of interest" description="Disordered" evidence="4">
    <location>
        <begin position="1"/>
        <end position="21"/>
    </location>
</feature>
<feature type="compositionally biased region" description="Polar residues" evidence="4">
    <location>
        <begin position="12"/>
        <end position="21"/>
    </location>
</feature>
<feature type="active site" description="Proton acceptor" evidence="2 3">
    <location>
        <position position="148"/>
    </location>
</feature>
<feature type="binding site" evidence="2">
    <location>
        <begin position="35"/>
        <end position="43"/>
    </location>
    <ligand>
        <name>ATP</name>
        <dbReference type="ChEBI" id="CHEBI:30616"/>
    </ligand>
</feature>
<feature type="binding site" evidence="2">
    <location>
        <position position="58"/>
    </location>
    <ligand>
        <name>ATP</name>
        <dbReference type="ChEBI" id="CHEBI:30616"/>
    </ligand>
</feature>
<feature type="non-terminal residue">
    <location>
        <position position="276"/>
    </location>
</feature>
<sequence>MARPSGRLGHNTRGTGSSSSGVLMVGPNFRVGKKIGCGNFGELRLGKNLYTNEYVAIKLEPMKSRAPQLHLEYRFYKQLGSGDGIPQVYYFGPCGKYNAMVLELLGPSLEDLFDLCDRTFSLKTVLMIAIQLISRMEYVHSKNLIYRDVKPENFLIGRPGNKTQQVIHIIDFGLAKEYIDPETKKHIPYREHKSLTGTARYMSINTHLGKEQSRRDDLEALGHMFMYFLRGSLPWQGLKADTLKERYQKIGDTKRATPIEVLCENFPEMATYLRYV</sequence>
<evidence type="ECO:0000250" key="1"/>
<evidence type="ECO:0000255" key="2">
    <source>
        <dbReference type="PROSITE-ProRule" id="PRU00159"/>
    </source>
</evidence>
<evidence type="ECO:0000255" key="3">
    <source>
        <dbReference type="PROSITE-ProRule" id="PRU10027"/>
    </source>
</evidence>
<evidence type="ECO:0000256" key="4">
    <source>
        <dbReference type="SAM" id="MobiDB-lite"/>
    </source>
</evidence>
<evidence type="ECO:0000305" key="5"/>
<keyword id="KW-0067">ATP-binding</keyword>
<keyword id="KW-0963">Cytoplasm</keyword>
<keyword id="KW-0418">Kinase</keyword>
<keyword id="KW-0547">Nucleotide-binding</keyword>
<keyword id="KW-1185">Reference proteome</keyword>
<keyword id="KW-0723">Serine/threonine-protein kinase</keyword>
<keyword id="KW-0808">Transferase</keyword>
<keyword id="KW-0879">Wnt signaling pathway</keyword>
<comment type="function">
    <text evidence="1">Casein kinases are operationally defined by their preferential utilization of acidic proteins such as caseins as substrates. It can phosphorylate a large number of proteins. Participates in Wnt signaling (By similarity).</text>
</comment>
<comment type="catalytic activity">
    <reaction>
        <text>L-seryl-[protein] + ATP = O-phospho-L-seryl-[protein] + ADP + H(+)</text>
        <dbReference type="Rhea" id="RHEA:17989"/>
        <dbReference type="Rhea" id="RHEA-COMP:9863"/>
        <dbReference type="Rhea" id="RHEA-COMP:11604"/>
        <dbReference type="ChEBI" id="CHEBI:15378"/>
        <dbReference type="ChEBI" id="CHEBI:29999"/>
        <dbReference type="ChEBI" id="CHEBI:30616"/>
        <dbReference type="ChEBI" id="CHEBI:83421"/>
        <dbReference type="ChEBI" id="CHEBI:456216"/>
        <dbReference type="EC" id="2.7.11.1"/>
    </reaction>
</comment>
<comment type="catalytic activity">
    <reaction>
        <text>L-threonyl-[protein] + ATP = O-phospho-L-threonyl-[protein] + ADP + H(+)</text>
        <dbReference type="Rhea" id="RHEA:46608"/>
        <dbReference type="Rhea" id="RHEA-COMP:11060"/>
        <dbReference type="Rhea" id="RHEA-COMP:11605"/>
        <dbReference type="ChEBI" id="CHEBI:15378"/>
        <dbReference type="ChEBI" id="CHEBI:30013"/>
        <dbReference type="ChEBI" id="CHEBI:30616"/>
        <dbReference type="ChEBI" id="CHEBI:61977"/>
        <dbReference type="ChEBI" id="CHEBI:456216"/>
        <dbReference type="EC" id="2.7.11.1"/>
    </reaction>
</comment>
<comment type="subunit">
    <text>Monomer.</text>
</comment>
<comment type="subcellular location">
    <subcellularLocation>
        <location>Cytoplasm</location>
    </subcellularLocation>
</comment>
<comment type="tissue specificity">
    <text>Testis.</text>
</comment>
<comment type="miscellaneous">
    <text>Triazolodiamine 1 is a commercial name for 5-amino-3-([4-(aminosulfonyl)phenyl]amino)-N-(2,6-difluorophenyl)-1H-1,2,4-triazole-1-carbothioamide.</text>
</comment>
<comment type="similarity">
    <text evidence="5">Belongs to the protein kinase superfamily. CK1 Ser/Thr protein kinase family. Casein kinase I subfamily.</text>
</comment>
<gene>
    <name type="primary">CSNK1G3</name>
</gene>
<dbReference type="EC" id="2.7.11.1"/>
<dbReference type="EMBL" id="M76542">
    <property type="protein sequence ID" value="AAA30454.1"/>
    <property type="molecule type" value="mRNA"/>
</dbReference>
<dbReference type="PIR" id="D56406">
    <property type="entry name" value="D56406"/>
</dbReference>
<dbReference type="RefSeq" id="NP_001098799.2">
    <property type="nucleotide sequence ID" value="NM_001105329.2"/>
</dbReference>
<dbReference type="SMR" id="P35509"/>
<dbReference type="FunCoup" id="P35509">
    <property type="interactions" value="153"/>
</dbReference>
<dbReference type="PaxDb" id="9913-ENSBTAP00000023329"/>
<dbReference type="GeneID" id="407190"/>
<dbReference type="KEGG" id="bta:407190"/>
<dbReference type="CTD" id="1456"/>
<dbReference type="eggNOG" id="KOG1165">
    <property type="taxonomic scope" value="Eukaryota"/>
</dbReference>
<dbReference type="HOGENOM" id="CLU_019279_2_0_1"/>
<dbReference type="InParanoid" id="P35509"/>
<dbReference type="OrthoDB" id="5800476at2759"/>
<dbReference type="Proteomes" id="UP000009136">
    <property type="component" value="Unplaced"/>
</dbReference>
<dbReference type="GO" id="GO:0005737">
    <property type="term" value="C:cytoplasm"/>
    <property type="evidence" value="ECO:0000318"/>
    <property type="project" value="GO_Central"/>
</dbReference>
<dbReference type="GO" id="GO:0005634">
    <property type="term" value="C:nucleus"/>
    <property type="evidence" value="ECO:0000318"/>
    <property type="project" value="GO_Central"/>
</dbReference>
<dbReference type="GO" id="GO:0005886">
    <property type="term" value="C:plasma membrane"/>
    <property type="evidence" value="ECO:0000318"/>
    <property type="project" value="GO_Central"/>
</dbReference>
<dbReference type="GO" id="GO:0005524">
    <property type="term" value="F:ATP binding"/>
    <property type="evidence" value="ECO:0007669"/>
    <property type="project" value="UniProtKB-KW"/>
</dbReference>
<dbReference type="GO" id="GO:0106310">
    <property type="term" value="F:protein serine kinase activity"/>
    <property type="evidence" value="ECO:0007669"/>
    <property type="project" value="RHEA"/>
</dbReference>
<dbReference type="GO" id="GO:0004674">
    <property type="term" value="F:protein serine/threonine kinase activity"/>
    <property type="evidence" value="ECO:0000318"/>
    <property type="project" value="GO_Central"/>
</dbReference>
<dbReference type="GO" id="GO:0006897">
    <property type="term" value="P:endocytosis"/>
    <property type="evidence" value="ECO:0000318"/>
    <property type="project" value="GO_Central"/>
</dbReference>
<dbReference type="GO" id="GO:0090263">
    <property type="term" value="P:positive regulation of canonical Wnt signaling pathway"/>
    <property type="evidence" value="ECO:0000318"/>
    <property type="project" value="GO_Central"/>
</dbReference>
<dbReference type="GO" id="GO:0007165">
    <property type="term" value="P:signal transduction"/>
    <property type="evidence" value="ECO:0000318"/>
    <property type="project" value="GO_Central"/>
</dbReference>
<dbReference type="GO" id="GO:0016055">
    <property type="term" value="P:Wnt signaling pathway"/>
    <property type="evidence" value="ECO:0007669"/>
    <property type="project" value="UniProtKB-KW"/>
</dbReference>
<dbReference type="FunFam" id="1.10.510.10:FF:000703">
    <property type="entry name" value="Casein kinase I gamma"/>
    <property type="match status" value="1"/>
</dbReference>
<dbReference type="FunFam" id="3.30.200.20:FF:000018">
    <property type="entry name" value="Casein kinase I isoform gamma-1"/>
    <property type="match status" value="1"/>
</dbReference>
<dbReference type="Gene3D" id="3.30.200.20">
    <property type="entry name" value="Phosphorylase Kinase, domain 1"/>
    <property type="match status" value="1"/>
</dbReference>
<dbReference type="Gene3D" id="1.10.510.10">
    <property type="entry name" value="Transferase(Phosphotransferase) domain 1"/>
    <property type="match status" value="1"/>
</dbReference>
<dbReference type="InterPro" id="IPR050235">
    <property type="entry name" value="CK1_Ser-Thr_kinase"/>
</dbReference>
<dbReference type="InterPro" id="IPR011009">
    <property type="entry name" value="Kinase-like_dom_sf"/>
</dbReference>
<dbReference type="InterPro" id="IPR000719">
    <property type="entry name" value="Prot_kinase_dom"/>
</dbReference>
<dbReference type="InterPro" id="IPR017441">
    <property type="entry name" value="Protein_kinase_ATP_BS"/>
</dbReference>
<dbReference type="InterPro" id="IPR008271">
    <property type="entry name" value="Ser/Thr_kinase_AS"/>
</dbReference>
<dbReference type="PANTHER" id="PTHR11909">
    <property type="entry name" value="CASEIN KINASE-RELATED"/>
    <property type="match status" value="1"/>
</dbReference>
<dbReference type="Pfam" id="PF00069">
    <property type="entry name" value="Pkinase"/>
    <property type="match status" value="1"/>
</dbReference>
<dbReference type="SMART" id="SM00220">
    <property type="entry name" value="S_TKc"/>
    <property type="match status" value="1"/>
</dbReference>
<dbReference type="SUPFAM" id="SSF56112">
    <property type="entry name" value="Protein kinase-like (PK-like)"/>
    <property type="match status" value="1"/>
</dbReference>
<dbReference type="PROSITE" id="PS00107">
    <property type="entry name" value="PROTEIN_KINASE_ATP"/>
    <property type="match status" value="1"/>
</dbReference>
<dbReference type="PROSITE" id="PS50011">
    <property type="entry name" value="PROTEIN_KINASE_DOM"/>
    <property type="match status" value="1"/>
</dbReference>
<dbReference type="PROSITE" id="PS00108">
    <property type="entry name" value="PROTEIN_KINASE_ST"/>
    <property type="match status" value="1"/>
</dbReference>
<proteinExistence type="evidence at transcript level"/>
<accession>P35509</accession>
<organism>
    <name type="scientific">Bos taurus</name>
    <name type="common">Bovine</name>
    <dbReference type="NCBI Taxonomy" id="9913"/>
    <lineage>
        <taxon>Eukaryota</taxon>
        <taxon>Metazoa</taxon>
        <taxon>Chordata</taxon>
        <taxon>Craniata</taxon>
        <taxon>Vertebrata</taxon>
        <taxon>Euteleostomi</taxon>
        <taxon>Mammalia</taxon>
        <taxon>Eutheria</taxon>
        <taxon>Laurasiatheria</taxon>
        <taxon>Artiodactyla</taxon>
        <taxon>Ruminantia</taxon>
        <taxon>Pecora</taxon>
        <taxon>Bovidae</taxon>
        <taxon>Bovinae</taxon>
        <taxon>Bos</taxon>
    </lineage>
</organism>
<reference key="1">
    <citation type="journal article" date="1991" name="Proc. Natl. Acad. Sci. U.S.A.">
        <title>Purification of casein kinase I and isolation of cDNAs encoding multiple casein kinase I-like enzymes.</title>
        <authorList>
            <person name="Rowles J."/>
            <person name="Slaughter C."/>
            <person name="Moomaw C."/>
            <person name="Hsu J."/>
            <person name="Cobb M.H."/>
        </authorList>
    </citation>
    <scope>NUCLEOTIDE SEQUENCE [MRNA]</scope>
    <source>
        <tissue>Brain</tissue>
    </source>
</reference>
<protein>
    <recommendedName>
        <fullName>Casein kinase I isoform gamma-3</fullName>
        <shortName>CKI-gamma 3</shortName>
        <ecNumber>2.7.11.1</ecNumber>
    </recommendedName>
</protein>
<name>KC1G3_BOVIN</name>